<name>UPPP_ACIBY</name>
<organism>
    <name type="scientific">Acinetobacter baumannii (strain AYE)</name>
    <dbReference type="NCBI Taxonomy" id="509173"/>
    <lineage>
        <taxon>Bacteria</taxon>
        <taxon>Pseudomonadati</taxon>
        <taxon>Pseudomonadota</taxon>
        <taxon>Gammaproteobacteria</taxon>
        <taxon>Moraxellales</taxon>
        <taxon>Moraxellaceae</taxon>
        <taxon>Acinetobacter</taxon>
        <taxon>Acinetobacter calcoaceticus/baumannii complex</taxon>
    </lineage>
</organism>
<feature type="chain" id="PRO_1000134676" description="Undecaprenyl-diphosphatase">
    <location>
        <begin position="1"/>
        <end position="272"/>
    </location>
</feature>
<feature type="transmembrane region" description="Helical" evidence="1">
    <location>
        <begin position="4"/>
        <end position="24"/>
    </location>
</feature>
<feature type="transmembrane region" description="Helical" evidence="1">
    <location>
        <begin position="43"/>
        <end position="63"/>
    </location>
</feature>
<feature type="transmembrane region" description="Helical" evidence="1">
    <location>
        <begin position="86"/>
        <end position="106"/>
    </location>
</feature>
<feature type="transmembrane region" description="Helical" evidence="1">
    <location>
        <begin position="109"/>
        <end position="129"/>
    </location>
</feature>
<feature type="transmembrane region" description="Helical" evidence="1">
    <location>
        <begin position="145"/>
        <end position="165"/>
    </location>
</feature>
<feature type="transmembrane region" description="Helical" evidence="1">
    <location>
        <begin position="186"/>
        <end position="206"/>
    </location>
</feature>
<feature type="transmembrane region" description="Helical" evidence="1">
    <location>
        <begin position="222"/>
        <end position="242"/>
    </location>
</feature>
<feature type="transmembrane region" description="Helical" evidence="1">
    <location>
        <begin position="249"/>
        <end position="269"/>
    </location>
</feature>
<evidence type="ECO:0000255" key="1">
    <source>
        <dbReference type="HAMAP-Rule" id="MF_01006"/>
    </source>
</evidence>
<keyword id="KW-0046">Antibiotic resistance</keyword>
<keyword id="KW-0997">Cell inner membrane</keyword>
<keyword id="KW-1003">Cell membrane</keyword>
<keyword id="KW-0133">Cell shape</keyword>
<keyword id="KW-0961">Cell wall biogenesis/degradation</keyword>
<keyword id="KW-0378">Hydrolase</keyword>
<keyword id="KW-0472">Membrane</keyword>
<keyword id="KW-0573">Peptidoglycan synthesis</keyword>
<keyword id="KW-0812">Transmembrane</keyword>
<keyword id="KW-1133">Transmembrane helix</keyword>
<reference key="1">
    <citation type="journal article" date="2008" name="PLoS ONE">
        <title>Comparative analysis of Acinetobacters: three genomes for three lifestyles.</title>
        <authorList>
            <person name="Vallenet D."/>
            <person name="Nordmann P."/>
            <person name="Barbe V."/>
            <person name="Poirel L."/>
            <person name="Mangenot S."/>
            <person name="Bataille E."/>
            <person name="Dossat C."/>
            <person name="Gas S."/>
            <person name="Kreimeyer A."/>
            <person name="Lenoble P."/>
            <person name="Oztas S."/>
            <person name="Poulain J."/>
            <person name="Segurens B."/>
            <person name="Robert C."/>
            <person name="Abergel C."/>
            <person name="Claverie J.-M."/>
            <person name="Raoult D."/>
            <person name="Medigue C."/>
            <person name="Weissenbach J."/>
            <person name="Cruveiller S."/>
        </authorList>
    </citation>
    <scope>NUCLEOTIDE SEQUENCE [LARGE SCALE GENOMIC DNA]</scope>
    <source>
        <strain>AYE</strain>
    </source>
</reference>
<comment type="function">
    <text evidence="1">Catalyzes the dephosphorylation of undecaprenyl diphosphate (UPP). Confers resistance to bacitracin.</text>
</comment>
<comment type="catalytic activity">
    <reaction evidence="1">
        <text>di-trans,octa-cis-undecaprenyl diphosphate + H2O = di-trans,octa-cis-undecaprenyl phosphate + phosphate + H(+)</text>
        <dbReference type="Rhea" id="RHEA:28094"/>
        <dbReference type="ChEBI" id="CHEBI:15377"/>
        <dbReference type="ChEBI" id="CHEBI:15378"/>
        <dbReference type="ChEBI" id="CHEBI:43474"/>
        <dbReference type="ChEBI" id="CHEBI:58405"/>
        <dbReference type="ChEBI" id="CHEBI:60392"/>
        <dbReference type="EC" id="3.6.1.27"/>
    </reaction>
</comment>
<comment type="subcellular location">
    <subcellularLocation>
        <location evidence="1">Cell inner membrane</location>
        <topology evidence="1">Multi-pass membrane protein</topology>
    </subcellularLocation>
</comment>
<comment type="miscellaneous">
    <text>Bacitracin is thought to be involved in the inhibition of peptidoglycan synthesis by sequestering undecaprenyl diphosphate, thereby reducing the pool of lipid carrier available.</text>
</comment>
<comment type="similarity">
    <text evidence="1">Belongs to the UppP family.</text>
</comment>
<gene>
    <name evidence="1" type="primary">uppP</name>
    <name type="ordered locus">ABAYE0716</name>
</gene>
<proteinExistence type="inferred from homology"/>
<accession>B0VEM6</accession>
<protein>
    <recommendedName>
        <fullName evidence="1">Undecaprenyl-diphosphatase</fullName>
        <ecNumber evidence="1">3.6.1.27</ecNumber>
    </recommendedName>
    <alternativeName>
        <fullName evidence="1">Bacitracin resistance protein</fullName>
    </alternativeName>
    <alternativeName>
        <fullName evidence="1">Undecaprenyl pyrophosphate phosphatase</fullName>
    </alternativeName>
</protein>
<sequence>MENFEVIKALFLGFVEGLTEFLPISSTGHLILFGHIIDFHSDGGRVFEVVIQLGAILAVCWLYRQKIINLIKGFFSGDVESRHFAISVLIAFSPAVIIGVLAVDFIKSVLFSPIVVAIALIVGALIIFWVESKQFEHKTDDATKITFKQALLVGLAQCVAMIPGTSRSGATIVGGMFAGLSRKAATEFSFFLAMPTMLGAATFDLIKNADVLTSDNMVNIGVGFVAAFIAALLVVKALVLFVERHTLRVFAWYRIVLGVIILIAAMFFNLSA</sequence>
<dbReference type="EC" id="3.6.1.27" evidence="1"/>
<dbReference type="EMBL" id="CU459141">
    <property type="protein sequence ID" value="CAM85677.1"/>
    <property type="molecule type" value="Genomic_DNA"/>
</dbReference>
<dbReference type="RefSeq" id="WP_000426935.1">
    <property type="nucleotide sequence ID" value="NZ_JBDGFB010000002.1"/>
</dbReference>
<dbReference type="SMR" id="B0VEM6"/>
<dbReference type="EnsemblBacteria" id="CAM85677">
    <property type="protein sequence ID" value="CAM85677"/>
    <property type="gene ID" value="ABAYE0716"/>
</dbReference>
<dbReference type="KEGG" id="aby:ABAYE0716"/>
<dbReference type="HOGENOM" id="CLU_060296_2_0_6"/>
<dbReference type="GO" id="GO:0005886">
    <property type="term" value="C:plasma membrane"/>
    <property type="evidence" value="ECO:0007669"/>
    <property type="project" value="UniProtKB-SubCell"/>
</dbReference>
<dbReference type="GO" id="GO:0050380">
    <property type="term" value="F:undecaprenyl-diphosphatase activity"/>
    <property type="evidence" value="ECO:0007669"/>
    <property type="project" value="UniProtKB-UniRule"/>
</dbReference>
<dbReference type="GO" id="GO:0071555">
    <property type="term" value="P:cell wall organization"/>
    <property type="evidence" value="ECO:0007669"/>
    <property type="project" value="UniProtKB-KW"/>
</dbReference>
<dbReference type="GO" id="GO:0009252">
    <property type="term" value="P:peptidoglycan biosynthetic process"/>
    <property type="evidence" value="ECO:0007669"/>
    <property type="project" value="UniProtKB-KW"/>
</dbReference>
<dbReference type="GO" id="GO:0008360">
    <property type="term" value="P:regulation of cell shape"/>
    <property type="evidence" value="ECO:0007669"/>
    <property type="project" value="UniProtKB-KW"/>
</dbReference>
<dbReference type="GO" id="GO:0046677">
    <property type="term" value="P:response to antibiotic"/>
    <property type="evidence" value="ECO:0007669"/>
    <property type="project" value="UniProtKB-UniRule"/>
</dbReference>
<dbReference type="HAMAP" id="MF_01006">
    <property type="entry name" value="Undec_diphosphatase"/>
    <property type="match status" value="1"/>
</dbReference>
<dbReference type="InterPro" id="IPR003824">
    <property type="entry name" value="UppP"/>
</dbReference>
<dbReference type="NCBIfam" id="NF001389">
    <property type="entry name" value="PRK00281.1-2"/>
    <property type="match status" value="1"/>
</dbReference>
<dbReference type="NCBIfam" id="NF001390">
    <property type="entry name" value="PRK00281.1-4"/>
    <property type="match status" value="1"/>
</dbReference>
<dbReference type="NCBIfam" id="TIGR00753">
    <property type="entry name" value="undec_PP_bacA"/>
    <property type="match status" value="1"/>
</dbReference>
<dbReference type="PANTHER" id="PTHR30622">
    <property type="entry name" value="UNDECAPRENYL-DIPHOSPHATASE"/>
    <property type="match status" value="1"/>
</dbReference>
<dbReference type="PANTHER" id="PTHR30622:SF3">
    <property type="entry name" value="UNDECAPRENYL-DIPHOSPHATASE"/>
    <property type="match status" value="1"/>
</dbReference>
<dbReference type="Pfam" id="PF02673">
    <property type="entry name" value="BacA"/>
    <property type="match status" value="1"/>
</dbReference>